<gene>
    <name type="ordered locus">At4g29670</name>
    <name type="ORF">T16L4.180</name>
</gene>
<proteinExistence type="evidence at transcript level"/>
<sequence length="236" mass="26337">MAGVVRLTTTSVQAIRVSSSFSSFATALNPLQPCLPPNSNLNSDKRLRLLSSSPSCSSSHYHPSSGLGSHLPLRRPKSQVVRVKVDENVAETEPPKWWERNAPNMVDIHSTEEFLSALSGAGERLVIVEFYGTWCASCRALFPKLCKTAVEHPDIVFLKVNFDENKPMCKSLNVRVLPFFHFYRGADGQLESFSCSLAKVKKAISVSPFPQLELGITLQTKRTTSLFFFDRIYQIL</sequence>
<dbReference type="EMBL" id="AL079344">
    <property type="protein sequence ID" value="CAB45327.1"/>
    <property type="molecule type" value="Genomic_DNA"/>
</dbReference>
<dbReference type="EMBL" id="AL161575">
    <property type="protein sequence ID" value="CAB79725.1"/>
    <property type="molecule type" value="Genomic_DNA"/>
</dbReference>
<dbReference type="EMBL" id="CP002687">
    <property type="protein sequence ID" value="AEE85659.1"/>
    <property type="molecule type" value="Genomic_DNA"/>
</dbReference>
<dbReference type="EMBL" id="CP002687">
    <property type="protein sequence ID" value="AEE85660.1"/>
    <property type="molecule type" value="Genomic_DNA"/>
</dbReference>
<dbReference type="EMBL" id="AF370616">
    <property type="protein sequence ID" value="AAK43935.1"/>
    <property type="molecule type" value="mRNA"/>
</dbReference>
<dbReference type="EMBL" id="AF386933">
    <property type="protein sequence ID" value="AAK62378.1"/>
    <property type="status" value="ALT_INIT"/>
    <property type="molecule type" value="mRNA"/>
</dbReference>
<dbReference type="EMBL" id="AY072462">
    <property type="protein sequence ID" value="AAL66877.1"/>
    <property type="molecule type" value="mRNA"/>
</dbReference>
<dbReference type="EMBL" id="AY086416">
    <property type="protein sequence ID" value="AAM63418.1"/>
    <property type="molecule type" value="mRNA"/>
</dbReference>
<dbReference type="PIR" id="T09930">
    <property type="entry name" value="T09930"/>
</dbReference>
<dbReference type="RefSeq" id="NP_567831.1">
    <molecule id="Q8LCT3-2"/>
    <property type="nucleotide sequence ID" value="NM_119112.3"/>
</dbReference>
<dbReference type="RefSeq" id="NP_849469.1">
    <molecule id="Q8LCT3-1"/>
    <property type="nucleotide sequence ID" value="NM_179138.3"/>
</dbReference>
<dbReference type="SMR" id="Q8LCT3"/>
<dbReference type="FunCoup" id="Q8LCT3">
    <property type="interactions" value="233"/>
</dbReference>
<dbReference type="IntAct" id="Q8LCT3">
    <property type="interactions" value="2"/>
</dbReference>
<dbReference type="STRING" id="3702.Q8LCT3"/>
<dbReference type="PaxDb" id="3702-AT4G29670.2"/>
<dbReference type="ProteomicsDB" id="245236">
    <molecule id="Q8LCT3-1"/>
</dbReference>
<dbReference type="EnsemblPlants" id="AT4G29670.1">
    <molecule id="Q8LCT3-2"/>
    <property type="protein sequence ID" value="AT4G29670.1"/>
    <property type="gene ID" value="AT4G29670"/>
</dbReference>
<dbReference type="EnsemblPlants" id="AT4G29670.2">
    <molecule id="Q8LCT3-1"/>
    <property type="protein sequence ID" value="AT4G29670.2"/>
    <property type="gene ID" value="AT4G29670"/>
</dbReference>
<dbReference type="GeneID" id="829088"/>
<dbReference type="Gramene" id="AT4G29670.1">
    <molecule id="Q8LCT3-2"/>
    <property type="protein sequence ID" value="AT4G29670.1"/>
    <property type="gene ID" value="AT4G29670"/>
</dbReference>
<dbReference type="Gramene" id="AT4G29670.2">
    <molecule id="Q8LCT3-1"/>
    <property type="protein sequence ID" value="AT4G29670.2"/>
    <property type="gene ID" value="AT4G29670"/>
</dbReference>
<dbReference type="KEGG" id="ath:AT4G29670"/>
<dbReference type="Araport" id="AT4G29670"/>
<dbReference type="TAIR" id="AT4G29670">
    <property type="gene designation" value="ACHT2"/>
</dbReference>
<dbReference type="eggNOG" id="KOG0907">
    <property type="taxonomic scope" value="Eukaryota"/>
</dbReference>
<dbReference type="InParanoid" id="Q8LCT3"/>
<dbReference type="OMA" id="ENRAMCT"/>
<dbReference type="PhylomeDB" id="Q8LCT3"/>
<dbReference type="PRO" id="PR:Q8LCT3"/>
<dbReference type="Proteomes" id="UP000006548">
    <property type="component" value="Chromosome 4"/>
</dbReference>
<dbReference type="ExpressionAtlas" id="Q8LCT3">
    <property type="expression patterns" value="baseline and differential"/>
</dbReference>
<dbReference type="GO" id="GO:0009507">
    <property type="term" value="C:chloroplast"/>
    <property type="evidence" value="ECO:0000314"/>
    <property type="project" value="TAIR"/>
</dbReference>
<dbReference type="GO" id="GO:0016671">
    <property type="term" value="F:oxidoreductase activity, acting on a sulfur group of donors, disulfide as acceptor"/>
    <property type="evidence" value="ECO:0000314"/>
    <property type="project" value="TAIR"/>
</dbReference>
<dbReference type="CDD" id="cd02947">
    <property type="entry name" value="TRX_family"/>
    <property type="match status" value="1"/>
</dbReference>
<dbReference type="Gene3D" id="3.40.30.10">
    <property type="entry name" value="Glutaredoxin"/>
    <property type="match status" value="1"/>
</dbReference>
<dbReference type="InterPro" id="IPR036249">
    <property type="entry name" value="Thioredoxin-like_sf"/>
</dbReference>
<dbReference type="InterPro" id="IPR017937">
    <property type="entry name" value="Thioredoxin_CS"/>
</dbReference>
<dbReference type="InterPro" id="IPR013766">
    <property type="entry name" value="Thioredoxin_domain"/>
</dbReference>
<dbReference type="PANTHER" id="PTHR43601">
    <property type="entry name" value="THIOREDOXIN, MITOCHONDRIAL"/>
    <property type="match status" value="1"/>
</dbReference>
<dbReference type="PANTHER" id="PTHR43601:SF32">
    <property type="entry name" value="THIOREDOXIN-LIKE 2-2, CHLOROPLASTIC"/>
    <property type="match status" value="1"/>
</dbReference>
<dbReference type="Pfam" id="PF00085">
    <property type="entry name" value="Thioredoxin"/>
    <property type="match status" value="1"/>
</dbReference>
<dbReference type="SUPFAM" id="SSF52833">
    <property type="entry name" value="Thioredoxin-like"/>
    <property type="match status" value="1"/>
</dbReference>
<dbReference type="PROSITE" id="PS00194">
    <property type="entry name" value="THIOREDOXIN_1"/>
    <property type="match status" value="1"/>
</dbReference>
<dbReference type="PROSITE" id="PS51352">
    <property type="entry name" value="THIOREDOXIN_2"/>
    <property type="match status" value="1"/>
</dbReference>
<reference key="1">
    <citation type="journal article" date="1999" name="Nature">
        <title>Sequence and analysis of chromosome 4 of the plant Arabidopsis thaliana.</title>
        <authorList>
            <person name="Mayer K.F.X."/>
            <person name="Schueller C."/>
            <person name="Wambutt R."/>
            <person name="Murphy G."/>
            <person name="Volckaert G."/>
            <person name="Pohl T."/>
            <person name="Duesterhoeft A."/>
            <person name="Stiekema W."/>
            <person name="Entian K.-D."/>
            <person name="Terryn N."/>
            <person name="Harris B."/>
            <person name="Ansorge W."/>
            <person name="Brandt P."/>
            <person name="Grivell L.A."/>
            <person name="Rieger M."/>
            <person name="Weichselgartner M."/>
            <person name="de Simone V."/>
            <person name="Obermaier B."/>
            <person name="Mache R."/>
            <person name="Mueller M."/>
            <person name="Kreis M."/>
            <person name="Delseny M."/>
            <person name="Puigdomenech P."/>
            <person name="Watson M."/>
            <person name="Schmidtheini T."/>
            <person name="Reichert B."/>
            <person name="Portetelle D."/>
            <person name="Perez-Alonso M."/>
            <person name="Boutry M."/>
            <person name="Bancroft I."/>
            <person name="Vos P."/>
            <person name="Hoheisel J."/>
            <person name="Zimmermann W."/>
            <person name="Wedler H."/>
            <person name="Ridley P."/>
            <person name="Langham S.-A."/>
            <person name="McCullagh B."/>
            <person name="Bilham L."/>
            <person name="Robben J."/>
            <person name="van der Schueren J."/>
            <person name="Grymonprez B."/>
            <person name="Chuang Y.-J."/>
            <person name="Vandenbussche F."/>
            <person name="Braeken M."/>
            <person name="Weltjens I."/>
            <person name="Voet M."/>
            <person name="Bastiaens I."/>
            <person name="Aert R."/>
            <person name="Defoor E."/>
            <person name="Weitzenegger T."/>
            <person name="Bothe G."/>
            <person name="Ramsperger U."/>
            <person name="Hilbert H."/>
            <person name="Braun M."/>
            <person name="Holzer E."/>
            <person name="Brandt A."/>
            <person name="Peters S."/>
            <person name="van Staveren M."/>
            <person name="Dirkse W."/>
            <person name="Mooijman P."/>
            <person name="Klein Lankhorst R."/>
            <person name="Rose M."/>
            <person name="Hauf J."/>
            <person name="Koetter P."/>
            <person name="Berneiser S."/>
            <person name="Hempel S."/>
            <person name="Feldpausch M."/>
            <person name="Lamberth S."/>
            <person name="Van den Daele H."/>
            <person name="De Keyser A."/>
            <person name="Buysshaert C."/>
            <person name="Gielen J."/>
            <person name="Villarroel R."/>
            <person name="De Clercq R."/>
            <person name="van Montagu M."/>
            <person name="Rogers J."/>
            <person name="Cronin A."/>
            <person name="Quail M.A."/>
            <person name="Bray-Allen S."/>
            <person name="Clark L."/>
            <person name="Doggett J."/>
            <person name="Hall S."/>
            <person name="Kay M."/>
            <person name="Lennard N."/>
            <person name="McLay K."/>
            <person name="Mayes R."/>
            <person name="Pettett A."/>
            <person name="Rajandream M.A."/>
            <person name="Lyne M."/>
            <person name="Benes V."/>
            <person name="Rechmann S."/>
            <person name="Borkova D."/>
            <person name="Bloecker H."/>
            <person name="Scharfe M."/>
            <person name="Grimm M."/>
            <person name="Loehnert T.-H."/>
            <person name="Dose S."/>
            <person name="de Haan M."/>
            <person name="Maarse A.C."/>
            <person name="Schaefer M."/>
            <person name="Mueller-Auer S."/>
            <person name="Gabel C."/>
            <person name="Fuchs M."/>
            <person name="Fartmann B."/>
            <person name="Granderath K."/>
            <person name="Dauner D."/>
            <person name="Herzl A."/>
            <person name="Neumann S."/>
            <person name="Argiriou A."/>
            <person name="Vitale D."/>
            <person name="Liguori R."/>
            <person name="Piravandi E."/>
            <person name="Massenet O."/>
            <person name="Quigley F."/>
            <person name="Clabauld G."/>
            <person name="Muendlein A."/>
            <person name="Felber R."/>
            <person name="Schnabl S."/>
            <person name="Hiller R."/>
            <person name="Schmidt W."/>
            <person name="Lecharny A."/>
            <person name="Aubourg S."/>
            <person name="Chefdor F."/>
            <person name="Cooke R."/>
            <person name="Berger C."/>
            <person name="Monfort A."/>
            <person name="Casacuberta E."/>
            <person name="Gibbons T."/>
            <person name="Weber N."/>
            <person name="Vandenbol M."/>
            <person name="Bargues M."/>
            <person name="Terol J."/>
            <person name="Torres A."/>
            <person name="Perez-Perez A."/>
            <person name="Purnelle B."/>
            <person name="Bent E."/>
            <person name="Johnson S."/>
            <person name="Tacon D."/>
            <person name="Jesse T."/>
            <person name="Heijnen L."/>
            <person name="Schwarz S."/>
            <person name="Scholler P."/>
            <person name="Heber S."/>
            <person name="Francs P."/>
            <person name="Bielke C."/>
            <person name="Frishman D."/>
            <person name="Haase D."/>
            <person name="Lemcke K."/>
            <person name="Mewes H.-W."/>
            <person name="Stocker S."/>
            <person name="Zaccaria P."/>
            <person name="Bevan M."/>
            <person name="Wilson R.K."/>
            <person name="de la Bastide M."/>
            <person name="Habermann K."/>
            <person name="Parnell L."/>
            <person name="Dedhia N."/>
            <person name="Gnoj L."/>
            <person name="Schutz K."/>
            <person name="Huang E."/>
            <person name="Spiegel L."/>
            <person name="Sekhon M."/>
            <person name="Murray J."/>
            <person name="Sheet P."/>
            <person name="Cordes M."/>
            <person name="Abu-Threideh J."/>
            <person name="Stoneking T."/>
            <person name="Kalicki J."/>
            <person name="Graves T."/>
            <person name="Harmon G."/>
            <person name="Edwards J."/>
            <person name="Latreille P."/>
            <person name="Courtney L."/>
            <person name="Cloud J."/>
            <person name="Abbott A."/>
            <person name="Scott K."/>
            <person name="Johnson D."/>
            <person name="Minx P."/>
            <person name="Bentley D."/>
            <person name="Fulton B."/>
            <person name="Miller N."/>
            <person name="Greco T."/>
            <person name="Kemp K."/>
            <person name="Kramer J."/>
            <person name="Fulton L."/>
            <person name="Mardis E."/>
            <person name="Dante M."/>
            <person name="Pepin K."/>
            <person name="Hillier L.W."/>
            <person name="Nelson J."/>
            <person name="Spieth J."/>
            <person name="Ryan E."/>
            <person name="Andrews S."/>
            <person name="Geisel C."/>
            <person name="Layman D."/>
            <person name="Du H."/>
            <person name="Ali J."/>
            <person name="Berghoff A."/>
            <person name="Jones K."/>
            <person name="Drone K."/>
            <person name="Cotton M."/>
            <person name="Joshu C."/>
            <person name="Antonoiu B."/>
            <person name="Zidanic M."/>
            <person name="Strong C."/>
            <person name="Sun H."/>
            <person name="Lamar B."/>
            <person name="Yordan C."/>
            <person name="Ma P."/>
            <person name="Zhong J."/>
            <person name="Preston R."/>
            <person name="Vil D."/>
            <person name="Shekher M."/>
            <person name="Matero A."/>
            <person name="Shah R."/>
            <person name="Swaby I.K."/>
            <person name="O'Shaughnessy A."/>
            <person name="Rodriguez M."/>
            <person name="Hoffman J."/>
            <person name="Till S."/>
            <person name="Granat S."/>
            <person name="Shohdy N."/>
            <person name="Hasegawa A."/>
            <person name="Hameed A."/>
            <person name="Lodhi M."/>
            <person name="Johnson A."/>
            <person name="Chen E."/>
            <person name="Marra M.A."/>
            <person name="Martienssen R."/>
            <person name="McCombie W.R."/>
        </authorList>
    </citation>
    <scope>NUCLEOTIDE SEQUENCE [LARGE SCALE GENOMIC DNA]</scope>
    <source>
        <strain>cv. Columbia</strain>
    </source>
</reference>
<reference key="2">
    <citation type="journal article" date="2017" name="Plant J.">
        <title>Araport11: a complete reannotation of the Arabidopsis thaliana reference genome.</title>
        <authorList>
            <person name="Cheng C.Y."/>
            <person name="Krishnakumar V."/>
            <person name="Chan A.P."/>
            <person name="Thibaud-Nissen F."/>
            <person name="Schobel S."/>
            <person name="Town C.D."/>
        </authorList>
    </citation>
    <scope>GENOME REANNOTATION</scope>
    <source>
        <strain>cv. Columbia</strain>
    </source>
</reference>
<reference key="3">
    <citation type="journal article" date="2003" name="Science">
        <title>Empirical analysis of transcriptional activity in the Arabidopsis genome.</title>
        <authorList>
            <person name="Yamada K."/>
            <person name="Lim J."/>
            <person name="Dale J.M."/>
            <person name="Chen H."/>
            <person name="Shinn P."/>
            <person name="Palm C.J."/>
            <person name="Southwick A.M."/>
            <person name="Wu H.C."/>
            <person name="Kim C.J."/>
            <person name="Nguyen M."/>
            <person name="Pham P.K."/>
            <person name="Cheuk R.F."/>
            <person name="Karlin-Newmann G."/>
            <person name="Liu S.X."/>
            <person name="Lam B."/>
            <person name="Sakano H."/>
            <person name="Wu T."/>
            <person name="Yu G."/>
            <person name="Miranda M."/>
            <person name="Quach H.L."/>
            <person name="Tripp M."/>
            <person name="Chang C.H."/>
            <person name="Lee J.M."/>
            <person name="Toriumi M.J."/>
            <person name="Chan M.M."/>
            <person name="Tang C.C."/>
            <person name="Onodera C.S."/>
            <person name="Deng J.M."/>
            <person name="Akiyama K."/>
            <person name="Ansari Y."/>
            <person name="Arakawa T."/>
            <person name="Banh J."/>
            <person name="Banno F."/>
            <person name="Bowser L."/>
            <person name="Brooks S.Y."/>
            <person name="Carninci P."/>
            <person name="Chao Q."/>
            <person name="Choy N."/>
            <person name="Enju A."/>
            <person name="Goldsmith A.D."/>
            <person name="Gurjal M."/>
            <person name="Hansen N.F."/>
            <person name="Hayashizaki Y."/>
            <person name="Johnson-Hopson C."/>
            <person name="Hsuan V.W."/>
            <person name="Iida K."/>
            <person name="Karnes M."/>
            <person name="Khan S."/>
            <person name="Koesema E."/>
            <person name="Ishida J."/>
            <person name="Jiang P.X."/>
            <person name="Jones T."/>
            <person name="Kawai J."/>
            <person name="Kamiya A."/>
            <person name="Meyers C."/>
            <person name="Nakajima M."/>
            <person name="Narusaka M."/>
            <person name="Seki M."/>
            <person name="Sakurai T."/>
            <person name="Satou M."/>
            <person name="Tamse R."/>
            <person name="Vaysberg M."/>
            <person name="Wallender E.K."/>
            <person name="Wong C."/>
            <person name="Yamamura Y."/>
            <person name="Yuan S."/>
            <person name="Shinozaki K."/>
            <person name="Davis R.W."/>
            <person name="Theologis A."/>
            <person name="Ecker J.R."/>
        </authorList>
    </citation>
    <scope>NUCLEOTIDE SEQUENCE [LARGE SCALE MRNA] (ISOFORM 1)</scope>
    <source>
        <strain>cv. Columbia</strain>
    </source>
</reference>
<reference key="4">
    <citation type="submission" date="2002-03" db="EMBL/GenBank/DDBJ databases">
        <title>Full-length cDNA from Arabidopsis thaliana.</title>
        <authorList>
            <person name="Brover V.V."/>
            <person name="Troukhan M.E."/>
            <person name="Alexandrov N.A."/>
            <person name="Lu Y.-P."/>
            <person name="Flavell R.B."/>
            <person name="Feldmann K.A."/>
        </authorList>
    </citation>
    <scope>NUCLEOTIDE SEQUENCE [LARGE SCALE MRNA] (ISOFORM 2)</scope>
</reference>
<reference key="5">
    <citation type="journal article" date="2009" name="Mol. Plant">
        <title>Comparative genomic study of the thioredoxin family in photosynthetic organisms with emphasis on Populus trichocarpa.</title>
        <authorList>
            <person name="Chibani K."/>
            <person name="Wingsle G."/>
            <person name="Jacquot J.P."/>
            <person name="Gelhaye E."/>
            <person name="Rouhier N."/>
        </authorList>
    </citation>
    <scope>GENE FAMILY</scope>
    <scope>NOMENCLATURE</scope>
</reference>
<reference key="6">
    <citation type="journal article" date="2009" name="Plant Physiol.">
        <title>A small family of chloroplast atypical thioredoxins.</title>
        <authorList>
            <person name="Dangoor I."/>
            <person name="Peled-Zehavi H."/>
            <person name="Levitan A."/>
            <person name="Pasand O."/>
            <person name="Danon A."/>
        </authorList>
    </citation>
    <scope>FUNCTION</scope>
    <scope>SUBCELLULAR LOCATION</scope>
</reference>
<evidence type="ECO:0000255" key="1"/>
<evidence type="ECO:0000255" key="2">
    <source>
        <dbReference type="PROSITE-ProRule" id="PRU00691"/>
    </source>
</evidence>
<evidence type="ECO:0000269" key="3">
    <source>
    </source>
</evidence>
<evidence type="ECO:0000303" key="4">
    <source ref="4"/>
</evidence>
<evidence type="ECO:0000305" key="5"/>
<feature type="transit peptide" description="Chloroplast" evidence="1">
    <location>
        <begin position="1"/>
        <end position="82"/>
    </location>
</feature>
<feature type="chain" id="PRO_0000034170" description="Thioredoxin-like 2-2, chloroplastic">
    <location>
        <begin position="83"/>
        <end position="236"/>
    </location>
</feature>
<feature type="domain" description="Thioredoxin" evidence="2">
    <location>
        <begin position="83"/>
        <end position="220"/>
    </location>
</feature>
<feature type="active site" description="Nucleophile" evidence="1">
    <location>
        <position position="135"/>
    </location>
</feature>
<feature type="active site" description="Nucleophile" evidence="1">
    <location>
        <position position="138"/>
    </location>
</feature>
<feature type="disulfide bond" description="Redox-active" evidence="2">
    <location>
        <begin position="135"/>
        <end position="138"/>
    </location>
</feature>
<feature type="splice variant" id="VSP_011555" description="In isoform 2." evidence="4">
    <original>VKKAISVSPFPQLELGITLQTKRTTSLFFFDRIYQIL</original>
    <variation>FQKIKDAIQLHNTDRCSLGPAKVPEGLTLAKPAASS</variation>
    <location>
        <begin position="200"/>
        <end position="236"/>
    </location>
</feature>
<feature type="sequence conflict" description="In Ref. 4; AAM63418." evidence="5" ref="4">
    <original>V</original>
    <variation>L</variation>
    <location>
        <position position="85"/>
    </location>
</feature>
<accession>Q8LCT3</accession>
<accession>Q94F31</accession>
<accession>Q9SU84</accession>
<organism>
    <name type="scientific">Arabidopsis thaliana</name>
    <name type="common">Mouse-ear cress</name>
    <dbReference type="NCBI Taxonomy" id="3702"/>
    <lineage>
        <taxon>Eukaryota</taxon>
        <taxon>Viridiplantae</taxon>
        <taxon>Streptophyta</taxon>
        <taxon>Embryophyta</taxon>
        <taxon>Tracheophyta</taxon>
        <taxon>Spermatophyta</taxon>
        <taxon>Magnoliopsida</taxon>
        <taxon>eudicotyledons</taxon>
        <taxon>Gunneridae</taxon>
        <taxon>Pentapetalae</taxon>
        <taxon>rosids</taxon>
        <taxon>malvids</taxon>
        <taxon>Brassicales</taxon>
        <taxon>Brassicaceae</taxon>
        <taxon>Camelineae</taxon>
        <taxon>Arabidopsis</taxon>
    </lineage>
</organism>
<name>TRL22_ARATH</name>
<keyword id="KW-0025">Alternative splicing</keyword>
<keyword id="KW-0150">Chloroplast</keyword>
<keyword id="KW-1015">Disulfide bond</keyword>
<keyword id="KW-0249">Electron transport</keyword>
<keyword id="KW-0934">Plastid</keyword>
<keyword id="KW-0676">Redox-active center</keyword>
<keyword id="KW-1185">Reference proteome</keyword>
<keyword id="KW-0809">Transit peptide</keyword>
<keyword id="KW-0813">Transport</keyword>
<protein>
    <recommendedName>
        <fullName>Thioredoxin-like 2-2, chloroplastic</fullName>
    </recommendedName>
    <alternativeName>
        <fullName>Atypical cysteine/histidine-rich thioredoxin 2</fullName>
        <shortName>AtACHT2</shortName>
    </alternativeName>
</protein>
<comment type="function">
    <text evidence="3">Thiol-disulfide oxidoreductase that may participate in various redox reactions. Possesses insulin disulfide bonds reducing activity.</text>
</comment>
<comment type="subcellular location">
    <subcellularLocation>
        <location evidence="3">Plastid</location>
        <location evidence="3">Chloroplast</location>
    </subcellularLocation>
</comment>
<comment type="alternative products">
    <event type="alternative splicing"/>
    <isoform>
        <id>Q8LCT3-1</id>
        <name>1</name>
        <sequence type="displayed"/>
    </isoform>
    <isoform>
        <id>Q8LCT3-2</id>
        <name>2</name>
        <sequence type="described" ref="VSP_011555"/>
    </isoform>
</comment>
<comment type="miscellaneous">
    <molecule>Isoform 2</molecule>
    <text evidence="5">May be due to an intron retention.</text>
</comment>
<comment type="similarity">
    <text evidence="5">Belongs to the thioredoxin family.</text>
</comment>
<comment type="caution">
    <text evidence="5">The active site contains a CASC motif which differs from the conserved CGPC motif.</text>
</comment>
<comment type="sequence caution" evidence="5">
    <conflict type="erroneous initiation">
        <sequence resource="EMBL-CDS" id="AAK62378"/>
    </conflict>
</comment>